<comment type="function">
    <text evidence="1">Required for the insertion and/or proper folding and/or complex formation of integral membrane proteins into the membrane. Involved in integration of membrane proteins that insert both dependently and independently of the Sec translocase complex, as well as at least some lipoproteins.</text>
</comment>
<comment type="subcellular location">
    <subcellularLocation>
        <location evidence="1">Cell membrane</location>
        <topology evidence="1">Multi-pass membrane protein</topology>
    </subcellularLocation>
</comment>
<comment type="similarity">
    <text evidence="1">Belongs to the OXA1/ALB3/YidC family. Type 2 subfamily.</text>
</comment>
<evidence type="ECO:0000255" key="1">
    <source>
        <dbReference type="HAMAP-Rule" id="MF_01811"/>
    </source>
</evidence>
<name>YIDC_OCEIH</name>
<organism>
    <name type="scientific">Oceanobacillus iheyensis (strain DSM 14371 / CIP 107618 / JCM 11309 / KCTC 3954 / HTE831)</name>
    <dbReference type="NCBI Taxonomy" id="221109"/>
    <lineage>
        <taxon>Bacteria</taxon>
        <taxon>Bacillati</taxon>
        <taxon>Bacillota</taxon>
        <taxon>Bacilli</taxon>
        <taxon>Bacillales</taxon>
        <taxon>Bacillaceae</taxon>
        <taxon>Oceanobacillus</taxon>
    </lineage>
</organism>
<feature type="signal peptide" evidence="1">
    <location>
        <begin position="1"/>
        <end position="20"/>
    </location>
</feature>
<feature type="chain" id="PRO_0000020391" description="Membrane protein insertase YidC">
    <location>
        <begin position="21"/>
        <end position="252"/>
    </location>
</feature>
<feature type="transmembrane region" description="Helical" evidence="1">
    <location>
        <begin position="59"/>
        <end position="79"/>
    </location>
</feature>
<feature type="transmembrane region" description="Helical" evidence="1">
    <location>
        <begin position="129"/>
        <end position="149"/>
    </location>
</feature>
<feature type="transmembrane region" description="Helical" evidence="1">
    <location>
        <begin position="160"/>
        <end position="180"/>
    </location>
</feature>
<feature type="transmembrane region" description="Helical" evidence="1">
    <location>
        <begin position="206"/>
        <end position="226"/>
    </location>
</feature>
<feature type="transmembrane region" description="Helical" evidence="1">
    <location>
        <begin position="228"/>
        <end position="248"/>
    </location>
</feature>
<feature type="lipid moiety-binding region" description="N-palmitoyl cysteine" evidence="1">
    <location>
        <position position="21"/>
    </location>
</feature>
<feature type="lipid moiety-binding region" description="S-diacylglycerol cysteine" evidence="1">
    <location>
        <position position="21"/>
    </location>
</feature>
<keyword id="KW-1003">Cell membrane</keyword>
<keyword id="KW-0143">Chaperone</keyword>
<keyword id="KW-0449">Lipoprotein</keyword>
<keyword id="KW-0472">Membrane</keyword>
<keyword id="KW-0564">Palmitate</keyword>
<keyword id="KW-0653">Protein transport</keyword>
<keyword id="KW-1185">Reference proteome</keyword>
<keyword id="KW-0732">Signal</keyword>
<keyword id="KW-0812">Transmembrane</keyword>
<keyword id="KW-1133">Transmembrane helix</keyword>
<keyword id="KW-0813">Transport</keyword>
<reference key="1">
    <citation type="journal article" date="2002" name="Nucleic Acids Res.">
        <title>Genome sequence of Oceanobacillus iheyensis isolated from the Iheya Ridge and its unexpected adaptive capabilities to extreme environments.</title>
        <authorList>
            <person name="Takami H."/>
            <person name="Takaki Y."/>
            <person name="Uchiyama I."/>
        </authorList>
    </citation>
    <scope>NUCLEOTIDE SEQUENCE [LARGE SCALE GENOMIC DNA]</scope>
    <source>
        <strain>DSM 14371 / CIP 107618 / JCM 11309 / KCTC 3954 / HTE831</strain>
    </source>
</reference>
<protein>
    <recommendedName>
        <fullName evidence="1">Membrane protein insertase YidC</fullName>
    </recommendedName>
    <alternativeName>
        <fullName evidence="1">Foldase YidC</fullName>
    </alternativeName>
    <alternativeName>
        <fullName evidence="1">Membrane integrase YidC</fullName>
    </alternativeName>
    <alternativeName>
        <fullName evidence="1">Membrane protein YidC</fullName>
    </alternativeName>
</protein>
<gene>
    <name evidence="1" type="primary">yidC</name>
    <name type="ordered locus">OB3494</name>
</gene>
<accession>Q8EKU1</accession>
<dbReference type="EMBL" id="BA000028">
    <property type="protein sequence ID" value="BAC15450.1"/>
    <property type="molecule type" value="Genomic_DNA"/>
</dbReference>
<dbReference type="RefSeq" id="WP_011067892.1">
    <property type="nucleotide sequence ID" value="NC_004193.1"/>
</dbReference>
<dbReference type="SMR" id="Q8EKU1"/>
<dbReference type="STRING" id="221109.gene:10735746"/>
<dbReference type="KEGG" id="oih:OB3494"/>
<dbReference type="eggNOG" id="COG0706">
    <property type="taxonomic scope" value="Bacteria"/>
</dbReference>
<dbReference type="HOGENOM" id="CLU_036138_5_0_9"/>
<dbReference type="OrthoDB" id="9780552at2"/>
<dbReference type="PhylomeDB" id="Q8EKU1"/>
<dbReference type="Proteomes" id="UP000000822">
    <property type="component" value="Chromosome"/>
</dbReference>
<dbReference type="GO" id="GO:0005886">
    <property type="term" value="C:plasma membrane"/>
    <property type="evidence" value="ECO:0007669"/>
    <property type="project" value="UniProtKB-SubCell"/>
</dbReference>
<dbReference type="GO" id="GO:0032977">
    <property type="term" value="F:membrane insertase activity"/>
    <property type="evidence" value="ECO:0007669"/>
    <property type="project" value="InterPro"/>
</dbReference>
<dbReference type="GO" id="GO:0051205">
    <property type="term" value="P:protein insertion into membrane"/>
    <property type="evidence" value="ECO:0007669"/>
    <property type="project" value="TreeGrafter"/>
</dbReference>
<dbReference type="GO" id="GO:0015031">
    <property type="term" value="P:protein transport"/>
    <property type="evidence" value="ECO:0007669"/>
    <property type="project" value="UniProtKB-KW"/>
</dbReference>
<dbReference type="CDD" id="cd20070">
    <property type="entry name" value="5TM_YidC_Alb3"/>
    <property type="match status" value="1"/>
</dbReference>
<dbReference type="HAMAP" id="MF_01811">
    <property type="entry name" value="YidC_type2"/>
    <property type="match status" value="1"/>
</dbReference>
<dbReference type="InterPro" id="IPR001708">
    <property type="entry name" value="YidC/ALB3/OXA1/COX18"/>
</dbReference>
<dbReference type="InterPro" id="IPR028055">
    <property type="entry name" value="YidC/Oxa/ALB_C"/>
</dbReference>
<dbReference type="InterPro" id="IPR023060">
    <property type="entry name" value="YidC/YidC1/YidC2_Firmicutes"/>
</dbReference>
<dbReference type="InterPro" id="IPR047196">
    <property type="entry name" value="YidC_ALB_C"/>
</dbReference>
<dbReference type="NCBIfam" id="TIGR03592">
    <property type="entry name" value="yidC_oxa1_cterm"/>
    <property type="match status" value="1"/>
</dbReference>
<dbReference type="PANTHER" id="PTHR12428:SF65">
    <property type="entry name" value="CYTOCHROME C OXIDASE ASSEMBLY PROTEIN COX18, MITOCHONDRIAL"/>
    <property type="match status" value="1"/>
</dbReference>
<dbReference type="PANTHER" id="PTHR12428">
    <property type="entry name" value="OXA1"/>
    <property type="match status" value="1"/>
</dbReference>
<dbReference type="Pfam" id="PF02096">
    <property type="entry name" value="60KD_IMP"/>
    <property type="match status" value="1"/>
</dbReference>
<dbReference type="PRINTS" id="PR00701">
    <property type="entry name" value="60KDINNERMP"/>
</dbReference>
<dbReference type="PROSITE" id="PS51257">
    <property type="entry name" value="PROKAR_LIPOPROTEIN"/>
    <property type="match status" value="1"/>
</dbReference>
<sequence length="252" mass="28599">MRKKFGIIVALIALTTLLSGCTEINEPITPNSDGIWNTIFVYPVSWLITNVAGVFNEGYGLAIIIVTLFVRLLLMPLNVKQIKSSKAMQEIQPKLQEIQKKYTSKDANTQQKLQQETMELFQKNGVNPLAGCLPILVQMPIFVAMYHAIMRTPEISTHSFLWFQLGSPDYILPILTGLFTFLQQKLMMSTNTSMNSNPQMKLQMQIMLYVMPIMIGVMAFFFPAALALYWVTGNIFMVFQTLLINKPMMAKK</sequence>
<proteinExistence type="inferred from homology"/>